<feature type="chain" id="PRO_0000416542" description="Nonribosomal peptide synthetase 1">
    <location>
        <begin position="1"/>
        <end position="6269"/>
    </location>
</feature>
<feature type="domain" description="Carrier 1" evidence="1">
    <location>
        <begin position="803"/>
        <end position="879"/>
    </location>
</feature>
<feature type="domain" description="Carrier 2" evidence="1">
    <location>
        <begin position="3392"/>
        <end position="3468"/>
    </location>
</feature>
<feature type="domain" description="Carrier 3" evidence="1">
    <location>
        <begin position="4487"/>
        <end position="4563"/>
    </location>
</feature>
<feature type="domain" description="Carrier 4" evidence="1">
    <location>
        <begin position="5552"/>
        <end position="5628"/>
    </location>
</feature>
<feature type="domain" description="Carrier 5" evidence="1">
    <location>
        <begin position="6139"/>
        <end position="6220"/>
    </location>
</feature>
<feature type="region of interest" description="Adenylation 1">
    <location>
        <begin position="249"/>
        <end position="781"/>
    </location>
</feature>
<feature type="region of interest" description="Epimerase 1">
    <location>
        <begin position="894"/>
        <end position="1342"/>
    </location>
</feature>
<feature type="region of interest" description="Condensation 1">
    <location>
        <begin position="1373"/>
        <end position="1775"/>
    </location>
</feature>
<feature type="region of interest" description="Adenylation 2">
    <location>
        <begin position="1725"/>
        <end position="2333"/>
    </location>
</feature>
<feature type="region of interest" description="Disordered" evidence="2">
    <location>
        <begin position="2364"/>
        <end position="2386"/>
    </location>
</feature>
<feature type="region of interest" description="Condensation 2">
    <location>
        <begin position="2597"/>
        <end position="2670"/>
    </location>
</feature>
<feature type="region of interest" description="Adenylation 3">
    <location>
        <begin position="2845"/>
        <end position="3368"/>
    </location>
</feature>
<feature type="region of interest" description="Condensation 3">
    <location>
        <begin position="3512"/>
        <end position="3898"/>
    </location>
</feature>
<feature type="region of interest" description="Adenylation 4">
    <location>
        <begin position="3919"/>
        <end position="4454"/>
    </location>
</feature>
<feature type="region of interest" description="Epimerase 2">
    <location>
        <begin position="4578"/>
        <end position="5024"/>
    </location>
</feature>
<feature type="region of interest" description="Condensation 4">
    <location>
        <begin position="5052"/>
        <end position="5466"/>
    </location>
</feature>
<feature type="region of interest" description="Disordered" evidence="2">
    <location>
        <begin position="5628"/>
        <end position="5658"/>
    </location>
</feature>
<feature type="region of interest" description="Condensation 5">
    <location>
        <begin position="5720"/>
        <end position="6067"/>
    </location>
</feature>
<feature type="compositionally biased region" description="Low complexity" evidence="2">
    <location>
        <begin position="2367"/>
        <end position="2376"/>
    </location>
</feature>
<feature type="compositionally biased region" description="Polar residues" evidence="2">
    <location>
        <begin position="2377"/>
        <end position="2386"/>
    </location>
</feature>
<feature type="compositionally biased region" description="Basic and acidic residues" evidence="2">
    <location>
        <begin position="5642"/>
        <end position="5657"/>
    </location>
</feature>
<feature type="modified residue" description="O-(pantetheine 4'-phosphoryl)serine" evidence="1">
    <location>
        <position position="840"/>
    </location>
</feature>
<feature type="modified residue" description="O-(pantetheine 4'-phosphoryl)serine" evidence="1">
    <location>
        <position position="3429"/>
    </location>
</feature>
<feature type="modified residue" description="O-(pantetheine 4'-phosphoryl)serine" evidence="1">
    <location>
        <position position="4524"/>
    </location>
</feature>
<feature type="modified residue" description="O-(pantetheine 4'-phosphoryl)serine" evidence="1">
    <location>
        <position position="5589"/>
    </location>
</feature>
<dbReference type="EC" id="6.3.2.-"/>
<dbReference type="EMBL" id="AAHF01000004">
    <property type="protein sequence ID" value="EAL90366.1"/>
    <property type="molecule type" value="Genomic_DNA"/>
</dbReference>
<dbReference type="RefSeq" id="XP_752404.1">
    <property type="nucleotide sequence ID" value="XM_747311.1"/>
</dbReference>
<dbReference type="SMR" id="Q4WT66"/>
<dbReference type="STRING" id="330879.Q4WT66"/>
<dbReference type="EnsemblFungi" id="EAL90366">
    <property type="protein sequence ID" value="EAL90366"/>
    <property type="gene ID" value="AFUA_1G10380"/>
</dbReference>
<dbReference type="GeneID" id="3510659"/>
<dbReference type="KEGG" id="afm:AFUA_1G10380"/>
<dbReference type="eggNOG" id="KOG1178">
    <property type="taxonomic scope" value="Eukaryota"/>
</dbReference>
<dbReference type="HOGENOM" id="CLU_000022_60_6_1"/>
<dbReference type="InParanoid" id="Q4WT66"/>
<dbReference type="OMA" id="YPCSRMQ"/>
<dbReference type="OrthoDB" id="416786at2759"/>
<dbReference type="PHI-base" id="PHI:2511"/>
<dbReference type="Proteomes" id="UP000002530">
    <property type="component" value="Chromosome 1"/>
</dbReference>
<dbReference type="GO" id="GO:0016874">
    <property type="term" value="F:ligase activity"/>
    <property type="evidence" value="ECO:0007669"/>
    <property type="project" value="UniProtKB-KW"/>
</dbReference>
<dbReference type="GO" id="GO:0031177">
    <property type="term" value="F:phosphopantetheine binding"/>
    <property type="evidence" value="ECO:0007669"/>
    <property type="project" value="InterPro"/>
</dbReference>
<dbReference type="CDD" id="cd05918">
    <property type="entry name" value="A_NRPS_SidN3_like"/>
    <property type="match status" value="4"/>
</dbReference>
<dbReference type="CDD" id="cd19542">
    <property type="entry name" value="CT_NRPS-like"/>
    <property type="match status" value="3"/>
</dbReference>
<dbReference type="CDD" id="cd19534">
    <property type="entry name" value="E_NRPS"/>
    <property type="match status" value="2"/>
</dbReference>
<dbReference type="CDD" id="cd19545">
    <property type="entry name" value="FUM14_C_NRPS-like"/>
    <property type="match status" value="1"/>
</dbReference>
<dbReference type="FunFam" id="3.40.50.980:FF:000001">
    <property type="entry name" value="Non-ribosomal peptide synthetase"/>
    <property type="match status" value="1"/>
</dbReference>
<dbReference type="FunFam" id="1.10.1200.10:FF:000024">
    <property type="entry name" value="Nonribosomal peptide synthase Pes1"/>
    <property type="match status" value="1"/>
</dbReference>
<dbReference type="FunFam" id="1.10.1200.10:FF:000026">
    <property type="entry name" value="Nonribosomal peptide synthase Pes1"/>
    <property type="match status" value="1"/>
</dbReference>
<dbReference type="FunFam" id="3.30.559.10:FF:000016">
    <property type="entry name" value="Nonribosomal peptide synthase Pes1"/>
    <property type="match status" value="2"/>
</dbReference>
<dbReference type="FunFam" id="3.30.559.10:FF:000017">
    <property type="entry name" value="Nonribosomal peptide synthase Pes1"/>
    <property type="match status" value="2"/>
</dbReference>
<dbReference type="FunFam" id="3.30.559.10:FF:000031">
    <property type="entry name" value="Nonribosomal peptide synthase Pes1"/>
    <property type="match status" value="1"/>
</dbReference>
<dbReference type="FunFam" id="3.30.559.10:FF:000037">
    <property type="entry name" value="Nonribosomal peptide synthase Pes1"/>
    <property type="match status" value="1"/>
</dbReference>
<dbReference type="FunFam" id="3.30.559.30:FF:000002">
    <property type="entry name" value="Nonribosomal peptide synthase Pes1"/>
    <property type="match status" value="2"/>
</dbReference>
<dbReference type="FunFam" id="3.30.559.30:FF:000005">
    <property type="entry name" value="Nonribosomal peptide synthase Pes1"/>
    <property type="match status" value="1"/>
</dbReference>
<dbReference type="FunFam" id="3.30.559.30:FF:000009">
    <property type="entry name" value="Nonribosomal peptide synthase Pes1"/>
    <property type="match status" value="1"/>
</dbReference>
<dbReference type="FunFam" id="3.30.559.30:FF:000010">
    <property type="entry name" value="Nonribosomal peptide synthase Pes1"/>
    <property type="match status" value="1"/>
</dbReference>
<dbReference type="FunFam" id="3.30.559.30:FF:000051">
    <property type="entry name" value="Nonribosomal peptide synthase Pes1"/>
    <property type="match status" value="1"/>
</dbReference>
<dbReference type="FunFam" id="3.40.50.12780:FF:000100">
    <property type="entry name" value="Nonribosomal peptide synthase Pes1"/>
    <property type="match status" value="1"/>
</dbReference>
<dbReference type="FunFam" id="3.30.300.30:FF:000015">
    <property type="entry name" value="Nonribosomal peptide synthase SidD"/>
    <property type="match status" value="3"/>
</dbReference>
<dbReference type="FunFam" id="3.30.559.30:FF:000003">
    <property type="entry name" value="Nonribosomal peptide synthase SidD"/>
    <property type="match status" value="1"/>
</dbReference>
<dbReference type="FunFam" id="1.10.1200.10:FF:000005">
    <property type="entry name" value="Nonribosomal peptide synthetase 1"/>
    <property type="match status" value="3"/>
</dbReference>
<dbReference type="FunFam" id="3.40.50.12780:FF:000014">
    <property type="entry name" value="Nonribosomal peptide synthetase 1"/>
    <property type="match status" value="3"/>
</dbReference>
<dbReference type="Gene3D" id="3.30.300.30">
    <property type="match status" value="4"/>
</dbReference>
<dbReference type="Gene3D" id="1.10.1200.10">
    <property type="entry name" value="ACP-like"/>
    <property type="match status" value="5"/>
</dbReference>
<dbReference type="Gene3D" id="3.30.559.10">
    <property type="entry name" value="Chloramphenicol acetyltransferase-like domain"/>
    <property type="match status" value="6"/>
</dbReference>
<dbReference type="Gene3D" id="3.40.50.12780">
    <property type="entry name" value="N-terminal domain of ligase-like"/>
    <property type="match status" value="4"/>
</dbReference>
<dbReference type="Gene3D" id="3.30.559.30">
    <property type="entry name" value="Nonribosomal peptide synthetase, condensation domain"/>
    <property type="match status" value="9"/>
</dbReference>
<dbReference type="InterPro" id="IPR010071">
    <property type="entry name" value="AA_adenyl_dom"/>
</dbReference>
<dbReference type="InterPro" id="IPR036736">
    <property type="entry name" value="ACP-like_sf"/>
</dbReference>
<dbReference type="InterPro" id="IPR045851">
    <property type="entry name" value="AMP-bd_C_sf"/>
</dbReference>
<dbReference type="InterPro" id="IPR020845">
    <property type="entry name" value="AMP-binding_CS"/>
</dbReference>
<dbReference type="InterPro" id="IPR000873">
    <property type="entry name" value="AMP-dep_synth/lig_dom"/>
</dbReference>
<dbReference type="InterPro" id="IPR042099">
    <property type="entry name" value="ANL_N_sf"/>
</dbReference>
<dbReference type="InterPro" id="IPR023213">
    <property type="entry name" value="CAT-like_dom_sf"/>
</dbReference>
<dbReference type="InterPro" id="IPR001242">
    <property type="entry name" value="Condensatn"/>
</dbReference>
<dbReference type="InterPro" id="IPR020806">
    <property type="entry name" value="PKS_PP-bd"/>
</dbReference>
<dbReference type="InterPro" id="IPR009081">
    <property type="entry name" value="PP-bd_ACP"/>
</dbReference>
<dbReference type="InterPro" id="IPR006162">
    <property type="entry name" value="Ppantetheine_attach_site"/>
</dbReference>
<dbReference type="NCBIfam" id="TIGR01733">
    <property type="entry name" value="AA-adenyl-dom"/>
    <property type="match status" value="3"/>
</dbReference>
<dbReference type="NCBIfam" id="NF003417">
    <property type="entry name" value="PRK04813.1"/>
    <property type="match status" value="4"/>
</dbReference>
<dbReference type="PANTHER" id="PTHR45398">
    <property type="match status" value="1"/>
</dbReference>
<dbReference type="PANTHER" id="PTHR45398:SF1">
    <property type="entry name" value="ENZYME, PUTATIVE (JCVI)-RELATED"/>
    <property type="match status" value="1"/>
</dbReference>
<dbReference type="Pfam" id="PF00501">
    <property type="entry name" value="AMP-binding"/>
    <property type="match status" value="4"/>
</dbReference>
<dbReference type="Pfam" id="PF00668">
    <property type="entry name" value="Condensation"/>
    <property type="match status" value="7"/>
</dbReference>
<dbReference type="Pfam" id="PF00550">
    <property type="entry name" value="PP-binding"/>
    <property type="match status" value="5"/>
</dbReference>
<dbReference type="SMART" id="SM00823">
    <property type="entry name" value="PKS_PP"/>
    <property type="match status" value="4"/>
</dbReference>
<dbReference type="SUPFAM" id="SSF56801">
    <property type="entry name" value="Acetyl-CoA synthetase-like"/>
    <property type="match status" value="4"/>
</dbReference>
<dbReference type="SUPFAM" id="SSF47336">
    <property type="entry name" value="ACP-like"/>
    <property type="match status" value="5"/>
</dbReference>
<dbReference type="SUPFAM" id="SSF52777">
    <property type="entry name" value="CoA-dependent acyltransferases"/>
    <property type="match status" value="15"/>
</dbReference>
<dbReference type="PROSITE" id="PS00455">
    <property type="entry name" value="AMP_BINDING"/>
    <property type="match status" value="1"/>
</dbReference>
<dbReference type="PROSITE" id="PS50075">
    <property type="entry name" value="CARRIER"/>
    <property type="match status" value="5"/>
</dbReference>
<dbReference type="PROSITE" id="PS00012">
    <property type="entry name" value="PHOSPHOPANTETHEINE"/>
    <property type="match status" value="2"/>
</dbReference>
<organism>
    <name type="scientific">Aspergillus fumigatus (strain ATCC MYA-4609 / CBS 101355 / FGSC A1100 / Af293)</name>
    <name type="common">Neosartorya fumigata</name>
    <dbReference type="NCBI Taxonomy" id="330879"/>
    <lineage>
        <taxon>Eukaryota</taxon>
        <taxon>Fungi</taxon>
        <taxon>Dikarya</taxon>
        <taxon>Ascomycota</taxon>
        <taxon>Pezizomycotina</taxon>
        <taxon>Eurotiomycetes</taxon>
        <taxon>Eurotiomycetidae</taxon>
        <taxon>Eurotiales</taxon>
        <taxon>Aspergillaceae</taxon>
        <taxon>Aspergillus</taxon>
        <taxon>Aspergillus subgen. Fumigati</taxon>
    </lineage>
</organism>
<comment type="function">
    <text evidence="4">Nonribosomal peptide synthesis (NRPS) is a key mechanism responsible for the biosynthesis of bioactive metabolites which are potentially contributing to organismal virulence. Contributes to improved fungal tolerance against oxidative stress, during the infection process.</text>
</comment>
<comment type="domain">
    <text evidence="3 5">NRP synthetases are composed of discrete domains (adenylation (A), thiolation (T) or peptidyl carrier protein (PCP) and condensation (C) domains) which when grouped together are referred to as a single module. Each module is responsible for the recognition (via the A domain) and incorporation of a single amino acid into the growing peptide product. Thus, an NRP synthetase is generally composed of one or more modules and can terminate in a thioesterase domain (TE) that releases the newly synthesized peptide from the enzyme. Occasionally, epimerase (E) domains (responsible for l- to d- amino acid conversion) are present within the NRP synthetase. NRPS1 has the following architecture: A-T-E-C-A-C-A-T-C-A-T-E-C-T-C-T.</text>
</comment>
<comment type="PTM">
    <text>The thiolation domains are 4'-phosphopantetheinylated.</text>
</comment>
<comment type="disruption phenotype">
    <text evidence="4">Decreases the virulence, increases the susceptibility to oxidative stress and exhibites altered conidial morphology and hydrophobicity.</text>
</comment>
<comment type="similarity">
    <text evidence="6">Belongs to the NRP synthetase family.</text>
</comment>
<evidence type="ECO:0000255" key="1">
    <source>
        <dbReference type="PROSITE-ProRule" id="PRU00258"/>
    </source>
</evidence>
<evidence type="ECO:0000256" key="2">
    <source>
        <dbReference type="SAM" id="MobiDB-lite"/>
    </source>
</evidence>
<evidence type="ECO:0000269" key="3">
    <source>
    </source>
</evidence>
<evidence type="ECO:0000269" key="4">
    <source>
    </source>
</evidence>
<evidence type="ECO:0000269" key="5">
    <source>
    </source>
</evidence>
<evidence type="ECO:0000305" key="6"/>
<protein>
    <recommendedName>
        <fullName>Nonribosomal peptide synthetase 1</fullName>
        <ecNumber>6.3.2.-</ecNumber>
    </recommendedName>
</protein>
<reference key="1">
    <citation type="journal article" date="2005" name="Nature">
        <title>Genomic sequence of the pathogenic and allergenic filamentous fungus Aspergillus fumigatus.</title>
        <authorList>
            <person name="Nierman W.C."/>
            <person name="Pain A."/>
            <person name="Anderson M.J."/>
            <person name="Wortman J.R."/>
            <person name="Kim H.S."/>
            <person name="Arroyo J."/>
            <person name="Berriman M."/>
            <person name="Abe K."/>
            <person name="Archer D.B."/>
            <person name="Bermejo C."/>
            <person name="Bennett J.W."/>
            <person name="Bowyer P."/>
            <person name="Chen D."/>
            <person name="Collins M."/>
            <person name="Coulsen R."/>
            <person name="Davies R."/>
            <person name="Dyer P.S."/>
            <person name="Farman M.L."/>
            <person name="Fedorova N."/>
            <person name="Fedorova N.D."/>
            <person name="Feldblyum T.V."/>
            <person name="Fischer R."/>
            <person name="Fosker N."/>
            <person name="Fraser A."/>
            <person name="Garcia J.L."/>
            <person name="Garcia M.J."/>
            <person name="Goble A."/>
            <person name="Goldman G.H."/>
            <person name="Gomi K."/>
            <person name="Griffith-Jones S."/>
            <person name="Gwilliam R."/>
            <person name="Haas B.J."/>
            <person name="Haas H."/>
            <person name="Harris D.E."/>
            <person name="Horiuchi H."/>
            <person name="Huang J."/>
            <person name="Humphray S."/>
            <person name="Jimenez J."/>
            <person name="Keller N."/>
            <person name="Khouri H."/>
            <person name="Kitamoto K."/>
            <person name="Kobayashi T."/>
            <person name="Konzack S."/>
            <person name="Kulkarni R."/>
            <person name="Kumagai T."/>
            <person name="Lafton A."/>
            <person name="Latge J.-P."/>
            <person name="Li W."/>
            <person name="Lord A."/>
            <person name="Lu C."/>
            <person name="Majoros W.H."/>
            <person name="May G.S."/>
            <person name="Miller B.L."/>
            <person name="Mohamoud Y."/>
            <person name="Molina M."/>
            <person name="Monod M."/>
            <person name="Mouyna I."/>
            <person name="Mulligan S."/>
            <person name="Murphy L.D."/>
            <person name="O'Neil S."/>
            <person name="Paulsen I."/>
            <person name="Penalva M.A."/>
            <person name="Pertea M."/>
            <person name="Price C."/>
            <person name="Pritchard B.L."/>
            <person name="Quail M.A."/>
            <person name="Rabbinowitsch E."/>
            <person name="Rawlins N."/>
            <person name="Rajandream M.A."/>
            <person name="Reichard U."/>
            <person name="Renauld H."/>
            <person name="Robson G.D."/>
            <person name="Rodriguez de Cordoba S."/>
            <person name="Rodriguez-Pena J.M."/>
            <person name="Ronning C.M."/>
            <person name="Rutter S."/>
            <person name="Salzberg S.L."/>
            <person name="Sanchez M."/>
            <person name="Sanchez-Ferrero J.C."/>
            <person name="Saunders D."/>
            <person name="Seeger K."/>
            <person name="Squares R."/>
            <person name="Squares S."/>
            <person name="Takeuchi M."/>
            <person name="Tekaia F."/>
            <person name="Turner G."/>
            <person name="Vazquez de Aldana C.R."/>
            <person name="Weidman J."/>
            <person name="White O."/>
            <person name="Woodward J.R."/>
            <person name="Yu J.-H."/>
            <person name="Fraser C.M."/>
            <person name="Galagan J.E."/>
            <person name="Asai K."/>
            <person name="Machida M."/>
            <person name="Hall N."/>
            <person name="Barrell B.G."/>
            <person name="Denning D.W."/>
        </authorList>
    </citation>
    <scope>NUCLEOTIDE SEQUENCE [LARGE SCALE GENOMIC DNA]</scope>
    <source>
        <strain>ATCC MYA-4609 / CBS 101355 / FGSC A1100 / Af293</strain>
    </source>
</reference>
<reference key="2">
    <citation type="journal article" date="2006" name="FEBS J.">
        <title>A nonribosomal peptide synthetase (Pes1) confers protection against oxidative stress in Aspergillus fumigatus.</title>
        <authorList>
            <person name="Reeves E.P."/>
            <person name="Reiber K."/>
            <person name="Neville C."/>
            <person name="Scheibner O."/>
            <person name="Kavanagh K."/>
            <person name="Doyle S."/>
        </authorList>
    </citation>
    <scope>PROTEIN SEQUENCE OF 867-876; 1193-1201; 3391-3402 AND 3696-3707</scope>
    <scope>DISRUPTION PHENOTYPE</scope>
    <scope>FUNCTION</scope>
</reference>
<reference key="3">
    <citation type="journal article" date="2005" name="ChemBioChem">
        <title>A 4'-phosphopantetheinyl transferase mediates non-ribosomal peptide synthetase activation in Aspergillus fumigatus.</title>
        <authorList>
            <person name="Neville C."/>
            <person name="Murphy A."/>
            <person name="Kavanagh K."/>
            <person name="Doyle S."/>
        </authorList>
    </citation>
    <scope>DOMAIN</scope>
    <scope>PHOSPHOPANTETHEINYLATION</scope>
</reference>
<reference key="4">
    <citation type="journal article" date="2006" name="Gene">
        <title>Phylogenomic analysis of non-ribosomal peptide synthetases in the genus Aspergillus.</title>
        <authorList>
            <person name="Cramer R.A. Jr."/>
            <person name="Stajich J.E."/>
            <person name="Yamanaka Y."/>
            <person name="Dietrich F.S."/>
            <person name="Steinbach W.J."/>
            <person name="Perfect J.R."/>
        </authorList>
    </citation>
    <scope>NOMENCLATURE</scope>
</reference>
<reference key="5">
    <citation type="journal article" date="2007" name="Microbiology">
        <title>Nonribosomal peptide synthesis in Aspergillus fumigatus and other fungi.</title>
        <authorList>
            <person name="Stack D."/>
            <person name="Neville C."/>
            <person name="Doyle S."/>
        </authorList>
    </citation>
    <scope>REVIEW ON FUNCTION</scope>
    <scope>DOMAIN</scope>
</reference>
<proteinExistence type="evidence at protein level"/>
<gene>
    <name type="primary">NRPS1</name>
    <name type="synonym">pes1</name>
    <name type="synonym">pesB</name>
    <name type="ORF">AFUA_1G10380</name>
</gene>
<keyword id="KW-0903">Direct protein sequencing</keyword>
<keyword id="KW-0436">Ligase</keyword>
<keyword id="KW-0596">Phosphopantetheine</keyword>
<keyword id="KW-0597">Phosphoprotein</keyword>
<keyword id="KW-1185">Reference proteome</keyword>
<keyword id="KW-0677">Repeat</keyword>
<keyword id="KW-0843">Virulence</keyword>
<name>NRPS1_ASPFU</name>
<accession>Q4WT66</accession>
<sequence>MAQSTVSCYLPNFGATCDGPKRPLSLKLRTDALQSSGLLSAWREGQLTQLLQASWALILHRYTGSEDICFGYHQIGNVSQDLLQSLEAVDPALCKVSVKEGISLKMFFDQFKTHNSPDSPLEIDRSSRKASENARLYNTILMIQICHDSNGTSPAIPLPSSLPIALPQEVSTERLVLYLPVQPSETYLQSRVRLHVKVLQDEVNIFFEWWNNDMPTAQMKSIAGAFGHILTDLLAANDTAVDDLDIFPENDWSRVCSFNSVLPKKHERCIHEMIYDRTLLQPENEAVCSWDGSLTYKELDLLSSKVAYDLQQRGVGPEVCVALCFEKSKWYTVAMLAVLKAGGAFVPMDPSHPTARLQSLVEGVQAHIMLCSRSQTGKLQTVAETLIPLDEETVDGLPDLPTSTFSSTTVKSSNAAYVIFTSGSTGQPKGTLLEHRAYVSGALAHGPVFGLNSSTRVLQFASHAFDASLVDILSSLIFGSCICIPSEEARLNDIAGVINEMKVNHASLTPSFVGFLDPAAVPGLESLVLAGEAMSPQHLATWSHIKLVNGYGPTESSVAAALNPNMSSSSDCRDIGLPVGVRFWVVNPANHDQLVPVGCPGELVLEGPTLARCYINNPQKTSDSFIFNPCWTKRDPNGGSDRRFYKTGDLVRYNSESGSLTYIGRKDAQVKFHGQRVELGEIESQLSADTDIKHCTVLLPKSGFAQGKLVTVVSLSAGPGQALEADAVPLKLIEHREKLRYVKSIQERLSIRLPTYMVPGVWLCVEALPMLVSGKLDRKSIATWVASMSEDPEVHATEAANARAANSTEDQLVSIWSRVLNVPKDRISVDESFLSLGGDSIAAITCVGHCKKQGIGLTVQEILRSKSIRELATRVKGVTQPVAYHEMIEEPFGLSPIQKLHFMVRKEGQGYFNQSVVTRIDRQINDQDMRRAVEAVVMRHSMLRSRLVDPSTGNSLQLRITEDVAGSYRWRTHYMTAQNEIENAIAESQLCINAFVGPVFAVDFCYVDEDSHNLLSLVAHHLVVDIVSWRIILEDLEDFLLNPQGFVLQNSSLPFQTWCRLQDEQCESVAFENDVQLEDLPAPDLAYWGMEHRQMTYGDVICETFELDPGSTQSILLECHQSLRTEPVDLFLAALVHSFGQTFPERTLPVIYNEGHGREVWDSSLDISRTVGWFTTLYPIFVQEIVSEDPARTVARVKDLRRQVSDNGRQKFASRMFTGKGQQTCRHHYPLEMTFNYVGQHRDLQKQDGLFQLMGHMAGEAGQGGGAADFGEETPRFALLEISALVVQGQLRFTFSFNRFMRHQSGIHAWISRCHQLLASLGQKLQSLAPQPTLSDFPMLSLTYEELDKMVSAKLPIAGITSLDLVEDVYPCSRMQQGILLSQSRNTSVYAVHDTFEVKGVGIKPSVDRLIIAWQKVVSRHAMLRTVFLENLTSQDLFCQVVLKEYNPAPALLSCSEERDVLPTFDNQQPVNYRDPRPAHRFSICETANGKLFCRLEISHAAMDGTSISLIVRDLQSAYSGQLQEDRKPMFKDYMRYLQSCSHSAGLNYWLPYLSDVKPCHFPVLNDGRPSNKRLQVIRLDFSSLKELQALCESCGLTLSTAFSTAWGLTLRSFCGSNEVCFSYMASLRDVSVDEIGSVVGPVINLLACRMKVTEDVCLEDVLHQVQNDYMESLPYRHTSLIDIQHALKLSDTILLNSGISYRKLPPKTLSNRDEMRLVEVGKIHDPAEFPVYVNIEATDDVAYIDLNYWTTSLSEGQAQNVASTFLQSLENIIHHHDEKICRLDQLSAQNKQQIAVWNNTLPKAVEKCIHEILEDKVKQCPEAVAIAAWDGNLTYAKLNELSSLLAFYLTKLGVGPGLLVPIDLDKSSWQIVAILAVLRAGGICLPVDAAQPYEFIEKLLIDKDIQVALASPNKAQLLERTIPYVVPVGRSLFDYLPRFDDMPHVSHKAMDHAYVVFTGGSVKEPKGVMLQHLTVLTRAENFASALELNKATKVYQSATYTSDMFLNVLFGTMMRGGCVCIPANDGFNNLPRSINASRANTVVMTPSLASLLQPSEVPEVQLLALYGEILTNQVRTIWSEKVRTHSLYGAAECSSSCIHASDCQTLGETRNLGLAAGCITWLVNLSDHDLLVPIGSVGEVVIEGPVIASGYLLHNGHVKGGFIENPVWRMNFERDEPSNDLEKRDESSTLTRRMFKTGDLARYNSDGILVYMGRKERQTQRLQADIWDVQQCIDTFSLPGHPCVVEPIRCLDDDESVEHLAVFVQFASTHLEKADGQRSVIGQPSSQFFDSVTKMHTYLLSVLPVTQVPRLYIPVPSMPLTSTGLLDRWFLRNEAQNLPAQTRIEFDLKSFHDFWRVELAHPKPSPSQLLPSSTSATHRSSGTSTYEWNGHIEWRDISKLESASLEAALLAAWALTISGYTRSDDVIFGELLLEQDSSGLDSTSDKAAPVVVPRRLQIAEDMSIAELMRKTQERLVAASPFQRAGLQRIRNVSADTSRACSFNNLFCFTRFDCKVQTLALAYPLGIFCIVANSELQLSACYDEQILSAPQVERILVQFARYVEYLKADLRSQETIGDMALRKNQTSYLSSPETVYWRKYLADVESCVFPSLNPDGERSGFSSAKLAIENLADLRRLCQKIEVTEDIVLQLVWGLVLRCYTGSEEVCYGYYQASPQPEGSKYLKVLPSRFLLKDDSDLESIAQQRKSELDEAMEHPISQIELQLELGFDWYSLLNTVFKFDRFAELPNDNNSTLDLLNDTEKGIWTIVVNPRFSFVSADILFEYRTDALSEANITSVVDCFQHILEEIINNDPVGHKIGDINFFGERACQQVREWNAALPERPDRCAHEIIEQQVLSHPTSPAICSWDGEFTYEQLDRLSTKLAKHLVCLGVKPEIFVGLCFEKSAWAVIAQVAVLKAGGAFASLDPSHPDARLRGLVDDIGAHIFLCSAKYLDKARQISRAAYIVSEETLAELPDVSSTASMTRPSIHNAAYAIFTSGTTGKPKVTVLEHIALSVSSPAFARSMGMDTTTRALQFSSYTFDVSIKEIIIVLMTGGCVCVPSDEERMNDLSGAIRRLNANFISCPPSVSNTIQPESVPSVKTVVMGGEKMTASHIDRWGDRFVINAYGPSESTVMATMSVKVDEAGVRVNNDCNSIGAAICGRTWVVDPNNYQRLLPIGAVGELVLEGCNVARGYLNNDQKTKESFISDPAWTKAPGLKELFKRKERMYRTGDLVRYNPDGTICFISRKDTQIKFNGQRIELEEIEQQCISFLSGGTQVAVEVVEPESKAVARSIAAFFTVDNQSGQDRPDLESQLLVPMSEATREKVQKLREALIKALPPIMIPRLFFPVSHLPFSNSGKLDRKKLRATVETLPKDQLKSYATLTAGSRQASDEGVEGTLRSLWEEALGLASGSVSAEDSFFSLGGDSFSAMKLVGAANSQGISLTFADVYEDPVFMNMAKRCGMLQGRSGRQTVTPFSLLPASVDREQLLEEVAEQCGVPRASIVDLYPCSPVQEGLLTLSVKQNGAYIAQPIFRLSEGIDLDMFKAAWQQVVDELDILRTRIVHTESLNFLQAVIDKEEISWASATTLDELTAESPELPRHNGGRLTGYAIAASQTGRYFCWTIHHALYDGWSIPLVLRRVEEVYTNSTASARTVPYSLFINYLLERSMADSDEYWKSQLANLSCSPFPQSRNPLPDSVRVGNRHHSSMKISRAASGVDLTIPELIRAAWAIVVSAHTGSSDVCFGETLMGRNIDLAGVTDIAGPVLTTVPTRIQVDNELPITQYLENMHHLTTTMLPHQHSGLQQIRKLNSDTASACEFQNLLVIQTGEGQLNKALWVAEPIQTSGDFFTHPLVVECKVDTSEVSITMHHDEIVLNSWQTEKLIGQFSFVLEQLLSINKGETRKLSELEIFSPLDSKEVALWNKRHPEAVEKCAHDIISERCSTHPDAPAVCAWDGEVSYKEMYTLASSFASYLACRGVGPETLVPICLDKSLWAIITILGILIAGGAYVPLDPAHPTSRHEEILTEVDARILICSPQYQSRYSSIVKTIIPVSKETIRAYFALNYQAKGLRRVTPFNMAYAIFTSGSTGRAKGIIIDHRALASSAMAFGPIVHLNETSRAFQFASLTFDAAVMEILATLMHGGCICIPSEDERLNDVAGAIRRMNVTWTFLTPSIASIIEPSTVPSLEVLACGGEKLSREVVTKWAHRVKLINGYGPTETTIFAVLNNVSPTTDPACIGYGIPCTLTWVVDPENHDRLTPLGAIGELALEGPALAREYLKNPKKTAEAFVDEPAWMKHFQSTLPSPRRIYKTGDLVRYNPDGSVEYISRKDYQVKLHGQRMELGEIEHRLHEDDRVRHAIVILPKEGLLKGRLVTILSLNSLKSGSSIISDNACELISREDLARVAYSELITIQKNLEAQLPIYMVPQTWAVIKKLPMLVSGKLDRKKITHWIENIDEPTYDRIMQDYDNIKRGHVEDSVNEDKSTAAKILQDIYAQVLNLPSNKVDPKRSFVSLGGDSITGMAVISRARKQGLNLTLHKILQSKSIVELIQAAEVETSSIQVEEKANKYFSLSPIQNLYFKSARTFKETGRFNQGMTVRVTRKVEPNVVKDALKAVASQHSMLRARFSRSANGKWQQRITNDIESSVRVGIHSVMSSHEMLGKIANTQSSLDIENGPIIAADLFTVNGEQVLFLVANHLCVDMVSWRIILQDIQEVIEAGSLSSEKPFSFQSWCELQLENSRSEADKAKLPFAIEPPNLSYWGMESVPNHYGQIRMESFVVGEDTTSFILGDCHEMLRTETIDILLAAVAQSFRRVFTDRRMPTIYNEGHGRESWDSNLDLSRTVGWFTTLCPLQVDECSGSDFVDTTKRVKDLRRKIKDNGRSYFARSLLQANNTEPSDFPVPLEIVFNYLGRLQQLERDDSLFKHYGEAFDEEKFRLAGDMGSDTPRFALLEISALVVNDKLQVSFTYNRQMQRESQIFQWISECRRVLEIDVLRFKDTVPEPTLSDFPLLPITYDGLKKLTSTTLPRAGVKTFSQVEDIYPCSSVQEGILLSQLRDPSAYMFHVIFEVRSPGGSGKVDPNMLRSAWSAVINRHPILRTLFIDSNYANGTFDQLVLRKVDEGAIILHCNDSDALVKLDTIKLSEINAGRCPKLLHQLTVCSTDSGRVLIKLEMNHAIIDGGSVDLLLRDLAMAYKHQLPEGSGPHFSDYIKFVRGKSQSQALSHWRQYLSDAHPCHLTFSEGTGGSRQLGSVMVPFSRYSELQQFCEKNSVTLANLTLAAWAIVLQSFTGSNDVCFGYPSAGRDAPVPGIQDAVGIFLNMLCCRVRFSPGKTLLEVSKTVQDDYIKNLPYQDCSLASIQHELGQKELFNTTISIQNHHAVSEESGNDLLSFDVQTAHDPTEYPVTVNVETAKGHEGILLRYWTDAVPEDKANNLANAIAHIFSCFIDKPSQLVSELDLRGGQLMKGGQFIDSKSLQELIDRRVTEIISQMLKEGTLAIPAADNGKGQFKGTTRAQPAKVTIKARGMHRERDLSDSTATLTEDHSKLMEPEKRLWKIWCSALGLASDTIQRQASFFKLGGDSITAMKMVSAAREDGLTLTMADVFNNPVFEDMLAAISASNSSSALEPDSPADSNNEKPAEPPRLVELERNPPPPEISLLKTVPLNDSALQDGICPKIGVFKGGIADVLPVTDFQAMSITATLFKSRWMLNYFFFDGRGSLDLRRLRESLLRVVDAFDILRTVFVCFNGQFFQVVLRKIRPNIFVHETEKNLDEYTEYLQQQDREQEARQGEQYVKFYIVKKKGSNHHRILIRMSHAQFDGLCLPTIMSAIKLGYEGSTLPPAPSFANYMRMLSGAITPDHYQHWTNLLKGSKMTQVIRRTEENTYRYIGAFREQRKTLEIQPSVLENVTIATVMQAAWAVTLAKLSAQSDVVFGLTISGRNTSIPGIENTVGPCLNVIPIRVTFKEGWTGVDLFRYLQDQQIANMPFEALGFREIIRRCTDWPSSTYFTTSVFHQNVEYEGQMQLDNTTYRMGGAGVVDNFTDMTLFSKSSSDGKLGVSLGYSDKGPIGPKFAAKVLSMVCDTVQSLLANSRVGLPSPSMLRSLPCQSVHDVPGMTDEMFLSTHLKDRSISDILVHSDVVTQAWQQVLPRNNADEPQSSFQLDSSFFELGGDVFDMAQVVWLLEQEGLQVHIEDLLEHPTFLGQMAVLTLHNSRTSDSMEEIVPVEEIPLPAARTGTSSSLGKALTLAKKVTRWSALSARG</sequence>